<proteinExistence type="inferred from homology"/>
<reference key="1">
    <citation type="submission" date="2006-09" db="EMBL/GenBank/DDBJ databases">
        <authorList>
            <consortium name="The Klebsiella pneumonia Genome Sequencing Project"/>
            <person name="McClelland M."/>
            <person name="Sanderson E.K."/>
            <person name="Spieth J."/>
            <person name="Clifton W.S."/>
            <person name="Latreille P."/>
            <person name="Sabo A."/>
            <person name="Pepin K."/>
            <person name="Bhonagiri V."/>
            <person name="Porwollik S."/>
            <person name="Ali J."/>
            <person name="Wilson R.K."/>
        </authorList>
    </citation>
    <scope>NUCLEOTIDE SEQUENCE [LARGE SCALE GENOMIC DNA]</scope>
    <source>
        <strain>ATCC 700721 / MGH 78578</strain>
    </source>
</reference>
<sequence>MSYQPQTEAATSRFLNVDEGGRTLRIHINDCGDGKETVVMLHGSGPGATGWANFSRNIDPLVEAGYRVLLLDCPGWGKSDAIVNSGSRSDLNARILKSVVDQLGIDKVHLLGNLMGGHSAVAFTLSWPERVAKLVLMGGGTGGMSLFTPMPTEGIKLLNALYREPTIENLKKMMSIFVFDTRDLTEALFEARLNNMLSRRDHLDNFVKSLEANPKQFPDFGPRLGEISAPTLIVWGRNDRFVPMDAGLRLLAGIAGSELHIYRDCGHWAQWEHADSFNQLVLNFLARA</sequence>
<name>MHPC_KLEP7</name>
<keyword id="KW-0058">Aromatic hydrocarbons catabolism</keyword>
<keyword id="KW-0378">Hydrolase</keyword>
<protein>
    <recommendedName>
        <fullName evidence="1">2-hydroxy-6-oxononadienedioate/2-hydroxy-6-oxononatrienedioate hydrolase</fullName>
        <ecNumber evidence="1">3.7.1.14</ecNumber>
    </recommendedName>
    <alternativeName>
        <fullName evidence="1">2-hydroxy-6-ketonona-2,4-diene-1,9-dioic acid 5,6-hydrolase</fullName>
    </alternativeName>
    <alternativeName>
        <fullName evidence="1">2-hydroxy-6-oxonona-2,4,7-triene-1,9-dioic acid 5,6-hydrolase</fullName>
    </alternativeName>
    <alternativeName>
        <fullName evidence="1">2-hydroxy-6-oxonona-2,4-diene-1,9-dioic acid 5,6-hydrolase</fullName>
    </alternativeName>
</protein>
<comment type="function">
    <text evidence="1">Catalyzes the cleavage of the C5-C6 bond of 2-hydroxy-6-oxononadienedioate and 2-hydroxy-6-oxononatrienedioate, a dienol ring fission product of the bacterial meta-cleavage pathway for degradation of phenylpropionic acid.</text>
</comment>
<comment type="catalytic activity">
    <reaction evidence="1">
        <text>(2Z,4E)-2-hydroxy-6-oxonona-2,4-dienedioate + H2O = (2Z)-2-hydroxypenta-2,4-dienoate + succinate + H(+)</text>
        <dbReference type="Rhea" id="RHEA:34187"/>
        <dbReference type="ChEBI" id="CHEBI:15377"/>
        <dbReference type="ChEBI" id="CHEBI:15378"/>
        <dbReference type="ChEBI" id="CHEBI:30031"/>
        <dbReference type="ChEBI" id="CHEBI:66887"/>
        <dbReference type="ChEBI" id="CHEBI:67152"/>
        <dbReference type="EC" id="3.7.1.14"/>
    </reaction>
</comment>
<comment type="catalytic activity">
    <reaction evidence="1">
        <text>(2Z,4E,7E)-2-hydroxy-6-oxonona-2,4,7-trienedioate + H2O = (2Z)-2-hydroxypenta-2,4-dienoate + fumarate + H(+)</text>
        <dbReference type="Rhea" id="RHEA:34191"/>
        <dbReference type="ChEBI" id="CHEBI:15377"/>
        <dbReference type="ChEBI" id="CHEBI:15378"/>
        <dbReference type="ChEBI" id="CHEBI:29806"/>
        <dbReference type="ChEBI" id="CHEBI:66888"/>
        <dbReference type="ChEBI" id="CHEBI:67152"/>
        <dbReference type="EC" id="3.7.1.14"/>
    </reaction>
</comment>
<comment type="pathway">
    <text evidence="1">Aromatic compound metabolism; 3-phenylpropanoate degradation.</text>
</comment>
<comment type="subunit">
    <text evidence="1">Homodimer.</text>
</comment>
<comment type="similarity">
    <text evidence="1">Belongs to the AB hydrolase superfamily. MhpC family.</text>
</comment>
<evidence type="ECO:0000255" key="1">
    <source>
        <dbReference type="HAMAP-Rule" id="MF_01654"/>
    </source>
</evidence>
<accession>A6TAC7</accession>
<gene>
    <name evidence="1" type="primary">mhpC</name>
    <name type="ordered locus">KPN78578_20870</name>
    <name type="ORF">KPN_02120</name>
</gene>
<dbReference type="EC" id="3.7.1.14" evidence="1"/>
<dbReference type="EMBL" id="CP000647">
    <property type="protein sequence ID" value="ABR77548.1"/>
    <property type="molecule type" value="Genomic_DNA"/>
</dbReference>
<dbReference type="RefSeq" id="WP_015958582.1">
    <property type="nucleotide sequence ID" value="NC_009648.1"/>
</dbReference>
<dbReference type="SMR" id="A6TAC7"/>
<dbReference type="STRING" id="272620.KPN_02120"/>
<dbReference type="ESTHER" id="klep7-mhpc">
    <property type="family name" value="Carbon-carbon_bond_hydrolase"/>
</dbReference>
<dbReference type="PaxDb" id="272620-KPN_02120"/>
<dbReference type="EnsemblBacteria" id="ABR77548">
    <property type="protein sequence ID" value="ABR77548"/>
    <property type="gene ID" value="KPN_02120"/>
</dbReference>
<dbReference type="KEGG" id="kpn:KPN_02120"/>
<dbReference type="HOGENOM" id="CLU_020336_13_2_6"/>
<dbReference type="UniPathway" id="UPA00714"/>
<dbReference type="Proteomes" id="UP000000265">
    <property type="component" value="Chromosome"/>
</dbReference>
<dbReference type="GO" id="GO:0005737">
    <property type="term" value="C:cytoplasm"/>
    <property type="evidence" value="ECO:0007669"/>
    <property type="project" value="InterPro"/>
</dbReference>
<dbReference type="GO" id="GO:0052823">
    <property type="term" value="F:2-hydroxy-6-oxonona-2,4,7-trienedioate hydrolase activity"/>
    <property type="evidence" value="ECO:0007669"/>
    <property type="project" value="RHEA"/>
</dbReference>
<dbReference type="GO" id="GO:0018771">
    <property type="term" value="F:2-hydroxy-6-oxonona-2,4-dienedioate hydrolase activity"/>
    <property type="evidence" value="ECO:0007669"/>
    <property type="project" value="UniProtKB-UniRule"/>
</dbReference>
<dbReference type="GO" id="GO:0042803">
    <property type="term" value="F:protein homodimerization activity"/>
    <property type="evidence" value="ECO:0007669"/>
    <property type="project" value="InterPro"/>
</dbReference>
<dbReference type="GO" id="GO:0019380">
    <property type="term" value="P:3-phenylpropionate catabolic process"/>
    <property type="evidence" value="ECO:0007669"/>
    <property type="project" value="UniProtKB-UniRule"/>
</dbReference>
<dbReference type="Gene3D" id="3.40.50.1820">
    <property type="entry name" value="alpha/beta hydrolase"/>
    <property type="match status" value="1"/>
</dbReference>
<dbReference type="HAMAP" id="MF_01654">
    <property type="entry name" value="MhpC"/>
    <property type="match status" value="1"/>
</dbReference>
<dbReference type="InterPro" id="IPR000073">
    <property type="entry name" value="AB_hydrolase_1"/>
</dbReference>
<dbReference type="InterPro" id="IPR029058">
    <property type="entry name" value="AB_hydrolase_fold"/>
</dbReference>
<dbReference type="InterPro" id="IPR000639">
    <property type="entry name" value="Epox_hydrolase-like"/>
</dbReference>
<dbReference type="InterPro" id="IPR023791">
    <property type="entry name" value="MhpC_alpha/beta_hydrolase"/>
</dbReference>
<dbReference type="PANTHER" id="PTHR43689:SF8">
    <property type="entry name" value="ALPHA_BETA-HYDROLASES SUPERFAMILY PROTEIN"/>
    <property type="match status" value="1"/>
</dbReference>
<dbReference type="PANTHER" id="PTHR43689">
    <property type="entry name" value="HYDROLASE"/>
    <property type="match status" value="1"/>
</dbReference>
<dbReference type="Pfam" id="PF00561">
    <property type="entry name" value="Abhydrolase_1"/>
    <property type="match status" value="1"/>
</dbReference>
<dbReference type="PRINTS" id="PR00111">
    <property type="entry name" value="ABHYDROLASE"/>
</dbReference>
<dbReference type="PRINTS" id="PR00412">
    <property type="entry name" value="EPOXHYDRLASE"/>
</dbReference>
<dbReference type="SUPFAM" id="SSF53474">
    <property type="entry name" value="alpha/beta-Hydrolases"/>
    <property type="match status" value="1"/>
</dbReference>
<organism>
    <name type="scientific">Klebsiella pneumoniae subsp. pneumoniae (strain ATCC 700721 / MGH 78578)</name>
    <dbReference type="NCBI Taxonomy" id="272620"/>
    <lineage>
        <taxon>Bacteria</taxon>
        <taxon>Pseudomonadati</taxon>
        <taxon>Pseudomonadota</taxon>
        <taxon>Gammaproteobacteria</taxon>
        <taxon>Enterobacterales</taxon>
        <taxon>Enterobacteriaceae</taxon>
        <taxon>Klebsiella/Raoultella group</taxon>
        <taxon>Klebsiella</taxon>
        <taxon>Klebsiella pneumoniae complex</taxon>
    </lineage>
</organism>
<feature type="chain" id="PRO_0000337783" description="2-hydroxy-6-oxononadienedioate/2-hydroxy-6-oxononatrienedioate hydrolase">
    <location>
        <begin position="1"/>
        <end position="288"/>
    </location>
</feature>
<feature type="active site" description="Proton acceptor" evidence="1">
    <location>
        <position position="267"/>
    </location>
</feature>
<feature type="site" description="Catalytic role in ketonization of the dienol substrate (substrate destabilization)" evidence="1">
    <location>
        <position position="192"/>
    </location>
</feature>